<name>M1_I02A4</name>
<evidence type="ECO:0000255" key="1">
    <source>
        <dbReference type="HAMAP-Rule" id="MF_04068"/>
    </source>
</evidence>
<gene>
    <name evidence="1" type="primary">M</name>
</gene>
<comment type="function">
    <text evidence="1">Plays critical roles in virus replication, from virus entry and uncoating to assembly and budding of the virus particle. M1 binding to ribonucleocapsids (RNPs) in nucleus seems to inhibit viral transcription. Interaction of viral NEP with M1-RNP is thought to promote nuclear export of the complex, which is targeted to the virion assembly site at the apical plasma membrane in polarized epithelial cells. Interactions with NA and HA may bring M1, a non-raft-associated protein, into lipid rafts. Forms a continuous shell on the inner side of the lipid bilayer in virion, where it binds the RNP. During virus entry into cell, the M2 ion channel acidifies the internal virion core, inducing M1 dissociation from the RNP. M1-free RNPs are transported to the nucleus, where viral transcription and replication can take place.</text>
</comment>
<comment type="function">
    <text evidence="1">Determines the virion's shape: spherical or filamentous. Clinical isolates of influenza are characterized by the presence of significant proportion of filamentous virions, whereas after multiple passage on eggs or cell culture, virions have only spherical morphology. Filamentous virions are thought to be important to infect neighboring cells, and spherical virions more suited to spread through aerosol between hosts organisms.</text>
</comment>
<comment type="subunit">
    <text evidence="1">Homodimer and homomultimer. Interacts with NEP. Binds ribonucleocapsid by both interacting with genomic RNA and NP protein. May interact with HA and NA. Cannot bind NP without genomic RNA.</text>
</comment>
<comment type="subcellular location">
    <subcellularLocation>
        <location evidence="1">Virion membrane</location>
        <topology evidence="1">Peripheral membrane protein</topology>
        <orientation evidence="1">Cytoplasmic side</orientation>
    </subcellularLocation>
    <subcellularLocation>
        <location evidence="1">Host nucleus</location>
    </subcellularLocation>
</comment>
<comment type="alternative products">
    <event type="alternative splicing"/>
    <isoform>
        <id>Q6DPT6-1</id>
        <name>M1</name>
        <sequence type="displayed"/>
    </isoform>
    <isoform>
        <id>Q6DPT7-1</id>
        <name>M2</name>
        <sequence type="external"/>
    </isoform>
    <text>Only the first 9 residues are shared by the 2 isoforms.</text>
</comment>
<comment type="miscellaneous">
    <text evidence="1">Most abundant protein in virion. When expressed alone can form virus-like particles in transfected cells.</text>
</comment>
<comment type="similarity">
    <text evidence="1">Belongs to the influenza viruses Matrix protein M1 family.</text>
</comment>
<dbReference type="EMBL" id="AY651402">
    <property type="protein sequence ID" value="AAT70557.1"/>
    <property type="molecule type" value="Genomic_RNA"/>
</dbReference>
<dbReference type="SMR" id="Q6DPT6"/>
<dbReference type="GO" id="GO:0042025">
    <property type="term" value="C:host cell nucleus"/>
    <property type="evidence" value="ECO:0007669"/>
    <property type="project" value="UniProtKB-SubCell"/>
</dbReference>
<dbReference type="GO" id="GO:0016020">
    <property type="term" value="C:membrane"/>
    <property type="evidence" value="ECO:0007669"/>
    <property type="project" value="UniProtKB-KW"/>
</dbReference>
<dbReference type="GO" id="GO:0055036">
    <property type="term" value="C:virion membrane"/>
    <property type="evidence" value="ECO:0007669"/>
    <property type="project" value="UniProtKB-SubCell"/>
</dbReference>
<dbReference type="GO" id="GO:0003723">
    <property type="term" value="F:RNA binding"/>
    <property type="evidence" value="ECO:0007669"/>
    <property type="project" value="UniProtKB-UniRule"/>
</dbReference>
<dbReference type="GO" id="GO:0039660">
    <property type="term" value="F:structural constituent of virion"/>
    <property type="evidence" value="ECO:0007669"/>
    <property type="project" value="UniProtKB-UniRule"/>
</dbReference>
<dbReference type="GO" id="GO:0046761">
    <property type="term" value="P:viral budding from plasma membrane"/>
    <property type="evidence" value="ECO:0007669"/>
    <property type="project" value="UniProtKB-UniRule"/>
</dbReference>
<dbReference type="FunFam" id="1.10.10.180:FF:000001">
    <property type="entry name" value="Matrix protein 1"/>
    <property type="match status" value="1"/>
</dbReference>
<dbReference type="FunFam" id="1.20.91.10:FF:000001">
    <property type="entry name" value="Matrix protein 1"/>
    <property type="match status" value="1"/>
</dbReference>
<dbReference type="Gene3D" id="1.10.10.180">
    <property type="match status" value="1"/>
</dbReference>
<dbReference type="Gene3D" id="1.20.91.10">
    <property type="match status" value="1"/>
</dbReference>
<dbReference type="HAMAP" id="MF_04068">
    <property type="entry name" value="INFV_M1"/>
    <property type="match status" value="1"/>
</dbReference>
<dbReference type="InterPro" id="IPR036039">
    <property type="entry name" value="Flu_matrix_M1"/>
</dbReference>
<dbReference type="InterPro" id="IPR013188">
    <property type="entry name" value="Flu_matrix_M1_C"/>
</dbReference>
<dbReference type="InterPro" id="IPR001561">
    <property type="entry name" value="Flu_matrix_M1_N"/>
</dbReference>
<dbReference type="InterPro" id="IPR015423">
    <property type="entry name" value="Flu_matrix_M1_N_sub1"/>
</dbReference>
<dbReference type="InterPro" id="IPR015799">
    <property type="entry name" value="Flu_matrix_M1_N_sub2"/>
</dbReference>
<dbReference type="InterPro" id="IPR037533">
    <property type="entry name" value="INFV_M1"/>
</dbReference>
<dbReference type="Pfam" id="PF00598">
    <property type="entry name" value="Flu_M1"/>
    <property type="match status" value="1"/>
</dbReference>
<dbReference type="Pfam" id="PF08289">
    <property type="entry name" value="Flu_M1_C"/>
    <property type="match status" value="1"/>
</dbReference>
<dbReference type="SMART" id="SM00759">
    <property type="entry name" value="Flu_M1_C"/>
    <property type="match status" value="1"/>
</dbReference>
<dbReference type="SUPFAM" id="SSF48145">
    <property type="entry name" value="Influenza virus matrix protein M1"/>
    <property type="match status" value="1"/>
</dbReference>
<keyword id="KW-0025">Alternative splicing</keyword>
<keyword id="KW-1048">Host nucleus</keyword>
<keyword id="KW-0472">Membrane</keyword>
<keyword id="KW-0694">RNA-binding</keyword>
<keyword id="KW-0468">Viral matrix protein</keyword>
<keyword id="KW-0946">Virion</keyword>
<feature type="chain" id="PRO_0000311614" description="Matrix protein 1">
    <location>
        <begin position="1"/>
        <end position="252"/>
    </location>
</feature>
<feature type="region of interest" description="Membrane-binding" evidence="1">
    <location>
        <begin position="1"/>
        <end position="164"/>
    </location>
</feature>
<feature type="region of interest" description="RNP-binding" evidence="1">
    <location>
        <begin position="165"/>
        <end position="252"/>
    </location>
</feature>
<feature type="short sequence motif" description="Nuclear localization signal" evidence="1">
    <location>
        <begin position="101"/>
        <end position="105"/>
    </location>
</feature>
<accession>Q6DPT6</accession>
<proteinExistence type="inferred from homology"/>
<sequence>MSLLTEVETYVLSIVPSGPLKAEIAQRLEDVFAGKNTDLEALMEWLKTRPILSPLTKGILGFVFTLTVPSERGLQRRRFVQNALNGNGDPNNMDRAVKLYKKLKREITFHGAKEVALSYSTGALASCMGLIYNRMGTVTTEVAFGLVCATCEQIADSQHRSHRQMATITNPLIRHENRMVLASTTAKAMEQMAGSSEQAAEAMEVASQARQMVQAMRTIGTHPNSSTGLRDNLLENLQAYQNRMGVQMQRFK</sequence>
<reference key="1">
    <citation type="journal article" date="2004" name="Nature">
        <title>Genesis of a highly pathogenic and potentially pandemic H5N1 influenza virus in eastern Asia.</title>
        <authorList>
            <person name="Li K.S."/>
            <person name="Guan Y."/>
            <person name="Wang J."/>
            <person name="Smith G.J.D."/>
            <person name="Xu K.M."/>
            <person name="Duan L."/>
            <person name="Rahardjo A.P."/>
            <person name="Puthavathana P."/>
            <person name="Buranathai C."/>
            <person name="Nguyen T.D."/>
            <person name="Estoepangestie A.T.S."/>
            <person name="Chaisingh A."/>
            <person name="Auewarakul P."/>
            <person name="Long H.T."/>
            <person name="Hanh N.T.H."/>
            <person name="Webby R.J."/>
            <person name="Poon L.L.M."/>
            <person name="Chen H."/>
            <person name="Shortridge K.F."/>
            <person name="Yuen K.Y."/>
            <person name="Webster R.G."/>
            <person name="Peiris J.S.M."/>
        </authorList>
    </citation>
    <scope>NUCLEOTIDE SEQUENCE [GENOMIC RNA]</scope>
</reference>
<protein>
    <recommendedName>
        <fullName evidence="1">Matrix protein 1</fullName>
        <shortName evidence="1">M1</shortName>
    </recommendedName>
</protein>
<organismHost>
    <name type="scientific">Aves</name>
    <dbReference type="NCBI Taxonomy" id="8782"/>
</organismHost>
<organismHost>
    <name type="scientific">Felis catus</name>
    <name type="common">Cat</name>
    <name type="synonym">Felis silvestris catus</name>
    <dbReference type="NCBI Taxonomy" id="9685"/>
</organismHost>
<organismHost>
    <name type="scientific">Homo sapiens</name>
    <name type="common">Human</name>
    <dbReference type="NCBI Taxonomy" id="9606"/>
</organismHost>
<organismHost>
    <name type="scientific">Panthera pardus</name>
    <name type="common">Leopard</name>
    <name type="synonym">Felis pardus</name>
    <dbReference type="NCBI Taxonomy" id="9691"/>
</organismHost>
<organismHost>
    <name type="scientific">Panthera tigris</name>
    <name type="common">Tiger</name>
    <dbReference type="NCBI Taxonomy" id="9694"/>
</organismHost>
<organismHost>
    <name type="scientific">Sus scrofa</name>
    <name type="common">Pig</name>
    <dbReference type="NCBI Taxonomy" id="9823"/>
</organismHost>
<organism>
    <name type="scientific">Influenza A virus (strain A/Silky Chicken/Hong Kong/YU100/2002 H5N1 genotype X3)</name>
    <dbReference type="NCBI Taxonomy" id="284214"/>
    <lineage>
        <taxon>Viruses</taxon>
        <taxon>Riboviria</taxon>
        <taxon>Orthornavirae</taxon>
        <taxon>Negarnaviricota</taxon>
        <taxon>Polyploviricotina</taxon>
        <taxon>Insthoviricetes</taxon>
        <taxon>Articulavirales</taxon>
        <taxon>Orthomyxoviridae</taxon>
        <taxon>Alphainfluenzavirus</taxon>
        <taxon>Alphainfluenzavirus influenzae</taxon>
        <taxon>Influenza A virus</taxon>
    </lineage>
</organism>